<organism>
    <name type="scientific">Drosophila erecta</name>
    <name type="common">Fruit fly</name>
    <dbReference type="NCBI Taxonomy" id="7220"/>
    <lineage>
        <taxon>Eukaryota</taxon>
        <taxon>Metazoa</taxon>
        <taxon>Ecdysozoa</taxon>
        <taxon>Arthropoda</taxon>
        <taxon>Hexapoda</taxon>
        <taxon>Insecta</taxon>
        <taxon>Pterygota</taxon>
        <taxon>Neoptera</taxon>
        <taxon>Endopterygota</taxon>
        <taxon>Diptera</taxon>
        <taxon>Brachycera</taxon>
        <taxon>Muscomorpha</taxon>
        <taxon>Ephydroidea</taxon>
        <taxon>Drosophilidae</taxon>
        <taxon>Drosophila</taxon>
        <taxon>Sophophora</taxon>
    </lineage>
</organism>
<gene>
    <name type="ORF">GG10733</name>
</gene>
<accession>B3N9X2</accession>
<dbReference type="EC" id="3.6.-.-" evidence="1"/>
<dbReference type="EMBL" id="CH954177">
    <property type="protein sequence ID" value="EDV59668.1"/>
    <property type="molecule type" value="Genomic_DNA"/>
</dbReference>
<dbReference type="SMR" id="B3N9X2"/>
<dbReference type="EnsemblMetazoa" id="FBtr0130787">
    <property type="protein sequence ID" value="FBpp0129279"/>
    <property type="gene ID" value="FBgn0103038"/>
</dbReference>
<dbReference type="EnsemblMetazoa" id="XM_001970573.3">
    <property type="protein sequence ID" value="XP_001970609.1"/>
    <property type="gene ID" value="LOC6542630"/>
</dbReference>
<dbReference type="GeneID" id="6542630"/>
<dbReference type="KEGG" id="der:6542630"/>
<dbReference type="eggNOG" id="KOG2825">
    <property type="taxonomic scope" value="Eukaryota"/>
</dbReference>
<dbReference type="HOGENOM" id="CLU_040761_0_0_1"/>
<dbReference type="OMA" id="MDAPYEF"/>
<dbReference type="OrthoDB" id="1770at2759"/>
<dbReference type="PhylomeDB" id="B3N9X2"/>
<dbReference type="Proteomes" id="UP000008711">
    <property type="component" value="Unassembled WGS sequence"/>
</dbReference>
<dbReference type="GO" id="GO:0043529">
    <property type="term" value="C:GET complex"/>
    <property type="evidence" value="ECO:0007669"/>
    <property type="project" value="TreeGrafter"/>
</dbReference>
<dbReference type="GO" id="GO:0005524">
    <property type="term" value="F:ATP binding"/>
    <property type="evidence" value="ECO:0007669"/>
    <property type="project" value="UniProtKB-UniRule"/>
</dbReference>
<dbReference type="GO" id="GO:0016887">
    <property type="term" value="F:ATP hydrolysis activity"/>
    <property type="evidence" value="ECO:0007669"/>
    <property type="project" value="InterPro"/>
</dbReference>
<dbReference type="GO" id="GO:0046872">
    <property type="term" value="F:metal ion binding"/>
    <property type="evidence" value="ECO:0007669"/>
    <property type="project" value="UniProtKB-KW"/>
</dbReference>
<dbReference type="GO" id="GO:0071816">
    <property type="term" value="P:tail-anchored membrane protein insertion into ER membrane"/>
    <property type="evidence" value="ECO:0007669"/>
    <property type="project" value="TreeGrafter"/>
</dbReference>
<dbReference type="CDD" id="cd02035">
    <property type="entry name" value="ArsA"/>
    <property type="match status" value="1"/>
</dbReference>
<dbReference type="FunFam" id="3.40.50.300:FF:000235">
    <property type="entry name" value="ATPase ASNA1"/>
    <property type="match status" value="1"/>
</dbReference>
<dbReference type="Gene3D" id="3.40.50.300">
    <property type="entry name" value="P-loop containing nucleotide triphosphate hydrolases"/>
    <property type="match status" value="1"/>
</dbReference>
<dbReference type="HAMAP" id="MF_03112">
    <property type="entry name" value="Asna1_Get3"/>
    <property type="match status" value="1"/>
</dbReference>
<dbReference type="InterPro" id="IPR025723">
    <property type="entry name" value="Anion-transp_ATPase-like_dom"/>
</dbReference>
<dbReference type="InterPro" id="IPR016300">
    <property type="entry name" value="ATPase_ArsA/GET3"/>
</dbReference>
<dbReference type="InterPro" id="IPR027542">
    <property type="entry name" value="ATPase_ArsA/GET3_euk"/>
</dbReference>
<dbReference type="InterPro" id="IPR027417">
    <property type="entry name" value="P-loop_NTPase"/>
</dbReference>
<dbReference type="NCBIfam" id="TIGR00345">
    <property type="entry name" value="GET3_arsA_TRC40"/>
    <property type="match status" value="1"/>
</dbReference>
<dbReference type="PANTHER" id="PTHR10803">
    <property type="entry name" value="ARSENICAL PUMP-DRIVING ATPASE ARSENITE-TRANSLOCATING ATPASE"/>
    <property type="match status" value="1"/>
</dbReference>
<dbReference type="PANTHER" id="PTHR10803:SF3">
    <property type="entry name" value="ATPASE GET3"/>
    <property type="match status" value="1"/>
</dbReference>
<dbReference type="Pfam" id="PF02374">
    <property type="entry name" value="ArsA_ATPase"/>
    <property type="match status" value="1"/>
</dbReference>
<dbReference type="SUPFAM" id="SSF52540">
    <property type="entry name" value="P-loop containing nucleoside triphosphate hydrolases"/>
    <property type="match status" value="1"/>
</dbReference>
<reference key="1">
    <citation type="journal article" date="2007" name="Nature">
        <title>Evolution of genes and genomes on the Drosophila phylogeny.</title>
        <authorList>
            <consortium name="Drosophila 12 genomes consortium"/>
        </authorList>
    </citation>
    <scope>NUCLEOTIDE SEQUENCE [LARGE SCALE GENOMIC DNA]</scope>
    <source>
        <strain>Tucson 14021-0224.01</strain>
    </source>
</reference>
<name>ASNA_DROER</name>
<keyword id="KW-0067">ATP-binding</keyword>
<keyword id="KW-0963">Cytoplasm</keyword>
<keyword id="KW-0256">Endoplasmic reticulum</keyword>
<keyword id="KW-0378">Hydrolase</keyword>
<keyword id="KW-0479">Metal-binding</keyword>
<keyword id="KW-0547">Nucleotide-binding</keyword>
<keyword id="KW-0813">Transport</keyword>
<keyword id="KW-0862">Zinc</keyword>
<feature type="chain" id="PRO_0000388149" description="ATPase ASNA1 homolog">
    <location>
        <begin position="1"/>
        <end position="336"/>
    </location>
</feature>
<feature type="active site" evidence="1">
    <location>
        <position position="58"/>
    </location>
</feature>
<feature type="binding site" evidence="1">
    <location>
        <begin position="29"/>
        <end position="36"/>
    </location>
    <ligand>
        <name>ATP</name>
        <dbReference type="ChEBI" id="CHEBI:30616"/>
    </ligand>
</feature>
<feature type="binding site" evidence="1">
    <location>
        <position position="236"/>
    </location>
    <ligand>
        <name>ATP</name>
        <dbReference type="ChEBI" id="CHEBI:30616"/>
    </ligand>
</feature>
<feature type="binding site" evidence="1">
    <location>
        <position position="263"/>
    </location>
    <ligand>
        <name>ATP</name>
        <dbReference type="ChEBI" id="CHEBI:30616"/>
    </ligand>
</feature>
<feature type="binding site" evidence="1">
    <location>
        <position position="275"/>
    </location>
    <ligand>
        <name>Zn(2+)</name>
        <dbReference type="ChEBI" id="CHEBI:29105"/>
        <note>ligand shared between dimeric partners</note>
    </ligand>
</feature>
<feature type="binding site" evidence="1">
    <location>
        <position position="278"/>
    </location>
    <ligand>
        <name>Zn(2+)</name>
        <dbReference type="ChEBI" id="CHEBI:29105"/>
        <note>ligand shared between dimeric partners</note>
    </ligand>
</feature>
<protein>
    <recommendedName>
        <fullName evidence="1">ATPase ASNA1 homolog</fullName>
        <ecNumber evidence="1">3.6.-.-</ecNumber>
    </recommendedName>
    <alternativeName>
        <fullName evidence="1">Arsenical pump-driving ATPase homolog</fullName>
    </alternativeName>
    <alternativeName>
        <fullName evidence="1">Arsenite-stimulated ATPase</fullName>
    </alternativeName>
</protein>
<sequence>MVDNLEPLEPSLQNLVEQDSLKWIFVGGKGGVGKTTCSSSLAVQLSKVRESVLIISTDPAHNISDAFDQKFTKVPTKVNGFDNLFAMEIDPNAGLNELPEEYFEGENEALRVSKGVMQEMINALPGIDEAMSYAEVMKLVKGMNFSVVVFDTAPTGHTLRLIAFPQVVEKGLGKLLRLKMKVAPLLSQFVSMLGMADVNADTLSQKLDDMLRIITQVNEQFKNPEQTTFVCVCIAEFFSLYETERLVQELTKCGIDVHNIIVNQLLFLQNSHDSCSMCASRFKIQEKYLDQIADLYEDFHVTKLPLLEKEVRGPESIRSFSENLMKPYEPKGKPKE</sequence>
<proteinExistence type="inferred from homology"/>
<comment type="function">
    <text evidence="1">ATPase required for the post-translational delivery of tail-anchored (TA) proteins to the endoplasmic reticulum. Recognizes and selectively binds the transmembrane domain of TA proteins in the cytosol. This complex then targets to the endoplasmic reticulum by membrane-bound receptors, where the tail-anchored protein is released for insertion. This process is regulated by ATP binding and hydrolysis. ATP binding drives the homodimer towards the closed dimer state, facilitating recognition of newly synthesized TA membrane proteins. ATP hydrolysis is required for insertion. Subsequently, the homodimer reverts towards the open dimer state, lowering its affinity for the membrane-bound receptor, and returning it to the cytosol to initiate a new round of targeting.</text>
</comment>
<comment type="subunit">
    <text evidence="1">Homodimer.</text>
</comment>
<comment type="subcellular location">
    <subcellularLocation>
        <location evidence="1">Cytoplasm</location>
    </subcellularLocation>
    <subcellularLocation>
        <location evidence="1">Endoplasmic reticulum</location>
    </subcellularLocation>
</comment>
<comment type="similarity">
    <text evidence="1">Belongs to the arsA ATPase family.</text>
</comment>
<evidence type="ECO:0000255" key="1">
    <source>
        <dbReference type="HAMAP-Rule" id="MF_03112"/>
    </source>
</evidence>